<sequence length="54" mass="6107">VILLLLIASIPSDAVQLKTKDDMPLASFHGNARRTLQMLSNKRICCYPNEWCCD</sequence>
<protein>
    <recommendedName>
        <fullName evidence="5">Conotoxin vc5c</fullName>
    </recommendedName>
    <alternativeName>
        <fullName evidence="4">Vc5.2</fullName>
    </alternativeName>
</protein>
<feature type="signal peptide" evidence="2">
    <location>
        <begin position="1" status="less than"/>
        <end position="14"/>
    </location>
</feature>
<feature type="propeptide" id="PRO_0000035045" evidence="1">
    <location>
        <begin position="15"/>
        <end position="43"/>
    </location>
</feature>
<feature type="peptide" id="PRO_0000035046" description="Conotoxin vc5c">
    <location>
        <begin position="44"/>
        <end position="54"/>
    </location>
</feature>
<feature type="modified residue" description="4-carboxyglutamate" evidence="3">
    <location>
        <position position="50"/>
    </location>
</feature>
<feature type="modified residue" description="6'-bromotryptophan" evidence="3">
    <location>
        <position position="51"/>
    </location>
</feature>
<feature type="non-terminal residue">
    <location>
        <position position="1"/>
    </location>
</feature>
<comment type="subcellular location">
    <subcellularLocation>
        <location>Secreted</location>
    </subcellularLocation>
</comment>
<comment type="tissue specificity">
    <text>Expressed by the venom duct.</text>
</comment>
<comment type="domain">
    <text>The cysteine framework is V (CC-CC).</text>
</comment>
<comment type="PTM">
    <text evidence="6">Contains 2 disulfide bonds that can be either 'C1-C3, C2-C4' or 'C1-C4, C2-C3', since these disulfide connectivities have been observed for conotoxins with cysteine framework V (for examples, see AC P0DQQ7 and AC P81755).</text>
</comment>
<comment type="similarity">
    <text evidence="6">Belongs to the conotoxin T superfamily.</text>
</comment>
<name>CT5C_CONVC</name>
<keyword id="KW-0102">Bromination</keyword>
<keyword id="KW-0165">Cleavage on pair of basic residues</keyword>
<keyword id="KW-1015">Disulfide bond</keyword>
<keyword id="KW-0301">Gamma-carboxyglutamic acid</keyword>
<keyword id="KW-0964">Secreted</keyword>
<keyword id="KW-0732">Signal</keyword>
<keyword id="KW-0800">Toxin</keyword>
<dbReference type="SMR" id="P69766"/>
<dbReference type="ConoServer" id="1522">
    <property type="toxin name" value="VcVC precursor"/>
</dbReference>
<dbReference type="GO" id="GO:0005576">
    <property type="term" value="C:extracellular region"/>
    <property type="evidence" value="ECO:0007669"/>
    <property type="project" value="UniProtKB-SubCell"/>
</dbReference>
<dbReference type="GO" id="GO:0090729">
    <property type="term" value="F:toxin activity"/>
    <property type="evidence" value="ECO:0007669"/>
    <property type="project" value="UniProtKB-KW"/>
</dbReference>
<dbReference type="InterPro" id="IPR031565">
    <property type="entry name" value="T-conotoxin"/>
</dbReference>
<dbReference type="Pfam" id="PF16981">
    <property type="entry name" value="Chi-conotoxin"/>
    <property type="match status" value="1"/>
</dbReference>
<proteinExistence type="evidence at protein level"/>
<organism>
    <name type="scientific">Conus victoriae</name>
    <name type="common">Queen Victoria cone</name>
    <dbReference type="NCBI Taxonomy" id="319920"/>
    <lineage>
        <taxon>Eukaryota</taxon>
        <taxon>Metazoa</taxon>
        <taxon>Spiralia</taxon>
        <taxon>Lophotrochozoa</taxon>
        <taxon>Mollusca</taxon>
        <taxon>Gastropoda</taxon>
        <taxon>Caenogastropoda</taxon>
        <taxon>Neogastropoda</taxon>
        <taxon>Conoidea</taxon>
        <taxon>Conidae</taxon>
        <taxon>Conus</taxon>
        <taxon>Cylinder</taxon>
    </lineage>
</organism>
<evidence type="ECO:0000250" key="1"/>
<evidence type="ECO:0000255" key="2"/>
<evidence type="ECO:0000269" key="3">
    <source>
    </source>
</evidence>
<evidence type="ECO:0000303" key="4">
    <source>
    </source>
</evidence>
<evidence type="ECO:0000303" key="5">
    <source>
    </source>
</evidence>
<evidence type="ECO:0000305" key="6"/>
<accession>P69766</accession>
<reference key="1">
    <citation type="journal article" date="2004" name="J. Mass Spectrom.">
        <title>Determining sequences and post-translational modifications of novel conotoxins in Conus victoriae using cDNA sequencing and mass spectrometry.</title>
        <authorList>
            <person name="Jakubowski J.A."/>
            <person name="Keays D.A."/>
            <person name="Kelley W.P."/>
            <person name="Sandall D.W."/>
            <person name="Bingham J.-P."/>
            <person name="Livett B.G."/>
            <person name="Gayler K.R."/>
            <person name="Sweedler J.V."/>
        </authorList>
    </citation>
    <scope>NUCLEOTIDE SEQUENCE [MRNA]</scope>
    <source>
        <tissue>Venom duct</tissue>
    </source>
</reference>
<reference key="2">
    <citation type="journal article" date="2006" name="Toxicon">
        <title>Screening for post-translational modifications in conotoxins using liquid chromatography/mass spectrometry: an important component of conotoxin discovery.</title>
        <authorList>
            <person name="Jakubowski J.A."/>
            <person name="Kelley W.P."/>
            <person name="Sweedler J.V."/>
        </authorList>
    </citation>
    <scope>GAMMA-CARBOXYGLUTAMATION AT GLU-50</scope>
    <scope>BROMINATION AT TRP-51</scope>
    <scope>IDENTIFICATION BY MASS SPECTROMETRY</scope>
    <source>
        <tissue>Venom</tissue>
    </source>
</reference>